<reference key="1">
    <citation type="journal article" date="1990" name="Mol. Gen. Genet.">
        <title>Molecular analysis of the mitochondrial transcription factor mtf2 of Saccharomyces cerevisiae.</title>
        <authorList>
            <person name="Lisowsky T."/>
        </authorList>
    </citation>
    <scope>NUCLEOTIDE SEQUENCE [GENOMIC DNA]</scope>
</reference>
<reference key="2">
    <citation type="journal article" date="1989" name="Mol. Gen. Genet.">
        <title>Novel class of nuclear genes involved in both mRNA splicing and protein synthesis in Saccharomyces cerevisiae mitochondria.</title>
        <authorList>
            <person name="Asher B.E."/>
            <person name="Groudinsky O."/>
            <person name="Dujardin G."/>
            <person name="Altamura N."/>
            <person name="Kermorgant M."/>
            <person name="Slonimski P.P."/>
        </authorList>
    </citation>
    <scope>NUCLEOTIDE SEQUENCE [GENOMIC DNA]</scope>
    <source>
        <strain>D273-10B/GR3</strain>
    </source>
</reference>
<reference key="3">
    <citation type="journal article" date="1997" name="Yeast">
        <title>The sequence of a 36.7 kb segment on the left arm of chromosome IV from Saccharomyces cerevisiae reveals 20 non-overlapping open reading frames (ORFs) including SIT4, FAD1, NAM1, RNA11, SIR2, NAT1, PRP9, ACT2 and MPS1 and 11 new ORFs.</title>
        <authorList>
            <person name="Saren A.-M."/>
            <person name="Laamanen P."/>
            <person name="Lejarcegui J.B."/>
            <person name="Paulin L."/>
        </authorList>
    </citation>
    <scope>NUCLEOTIDE SEQUENCE [GENOMIC DNA]</scope>
    <source>
        <strain>ATCC 204508 / S288c</strain>
    </source>
</reference>
<reference key="4">
    <citation type="journal article" date="1997" name="Nature">
        <title>The nucleotide sequence of Saccharomyces cerevisiae chromosome IV.</title>
        <authorList>
            <person name="Jacq C."/>
            <person name="Alt-Moerbe J."/>
            <person name="Andre B."/>
            <person name="Arnold W."/>
            <person name="Bahr A."/>
            <person name="Ballesta J.P.G."/>
            <person name="Bargues M."/>
            <person name="Baron L."/>
            <person name="Becker A."/>
            <person name="Biteau N."/>
            <person name="Bloecker H."/>
            <person name="Blugeon C."/>
            <person name="Boskovic J."/>
            <person name="Brandt P."/>
            <person name="Brueckner M."/>
            <person name="Buitrago M.J."/>
            <person name="Coster F."/>
            <person name="Delaveau T."/>
            <person name="del Rey F."/>
            <person name="Dujon B."/>
            <person name="Eide L.G."/>
            <person name="Garcia-Cantalejo J.M."/>
            <person name="Goffeau A."/>
            <person name="Gomez-Peris A."/>
            <person name="Granotier C."/>
            <person name="Hanemann V."/>
            <person name="Hankeln T."/>
            <person name="Hoheisel J.D."/>
            <person name="Jaeger W."/>
            <person name="Jimenez A."/>
            <person name="Jonniaux J.-L."/>
            <person name="Kraemer C."/>
            <person name="Kuester H."/>
            <person name="Laamanen P."/>
            <person name="Legros Y."/>
            <person name="Louis E.J."/>
            <person name="Moeller-Rieker S."/>
            <person name="Monnet A."/>
            <person name="Moro M."/>
            <person name="Mueller-Auer S."/>
            <person name="Nussbaumer B."/>
            <person name="Paricio N."/>
            <person name="Paulin L."/>
            <person name="Perea J."/>
            <person name="Perez-Alonso M."/>
            <person name="Perez-Ortin J.E."/>
            <person name="Pohl T.M."/>
            <person name="Prydz H."/>
            <person name="Purnelle B."/>
            <person name="Rasmussen S.W."/>
            <person name="Remacha M.A."/>
            <person name="Revuelta J.L."/>
            <person name="Rieger M."/>
            <person name="Salom D."/>
            <person name="Saluz H.P."/>
            <person name="Saiz J.E."/>
            <person name="Saren A.-M."/>
            <person name="Schaefer M."/>
            <person name="Scharfe M."/>
            <person name="Schmidt E.R."/>
            <person name="Schneider C."/>
            <person name="Scholler P."/>
            <person name="Schwarz S."/>
            <person name="Soler-Mira A."/>
            <person name="Urrestarazu L.A."/>
            <person name="Verhasselt P."/>
            <person name="Vissers S."/>
            <person name="Voet M."/>
            <person name="Volckaert G."/>
            <person name="Wagner G."/>
            <person name="Wambutt R."/>
            <person name="Wedler E."/>
            <person name="Wedler H."/>
            <person name="Woelfl S."/>
            <person name="Harris D.E."/>
            <person name="Bowman S."/>
            <person name="Brown D."/>
            <person name="Churcher C.M."/>
            <person name="Connor R."/>
            <person name="Dedman K."/>
            <person name="Gentles S."/>
            <person name="Hamlin N."/>
            <person name="Hunt S."/>
            <person name="Jones L."/>
            <person name="McDonald S."/>
            <person name="Murphy L.D."/>
            <person name="Niblett D."/>
            <person name="Odell C."/>
            <person name="Oliver K."/>
            <person name="Rajandream M.A."/>
            <person name="Richards C."/>
            <person name="Shore L."/>
            <person name="Walsh S.V."/>
            <person name="Barrell B.G."/>
            <person name="Dietrich F.S."/>
            <person name="Mulligan J.T."/>
            <person name="Allen E."/>
            <person name="Araujo R."/>
            <person name="Aviles E."/>
            <person name="Berno A."/>
            <person name="Carpenter J."/>
            <person name="Chen E."/>
            <person name="Cherry J.M."/>
            <person name="Chung E."/>
            <person name="Duncan M."/>
            <person name="Hunicke-Smith S."/>
            <person name="Hyman R.W."/>
            <person name="Komp C."/>
            <person name="Lashkari D."/>
            <person name="Lew H."/>
            <person name="Lin D."/>
            <person name="Mosedale D."/>
            <person name="Nakahara K."/>
            <person name="Namath A."/>
            <person name="Oefner P."/>
            <person name="Oh C."/>
            <person name="Petel F.X."/>
            <person name="Roberts D."/>
            <person name="Schramm S."/>
            <person name="Schroeder M."/>
            <person name="Shogren T."/>
            <person name="Shroff N."/>
            <person name="Winant A."/>
            <person name="Yelton M.A."/>
            <person name="Botstein D."/>
            <person name="Davis R.W."/>
            <person name="Johnston M."/>
            <person name="Andrews S."/>
            <person name="Brinkman R."/>
            <person name="Cooper J."/>
            <person name="Ding H."/>
            <person name="Du Z."/>
            <person name="Favello A."/>
            <person name="Fulton L."/>
            <person name="Gattung S."/>
            <person name="Greco T."/>
            <person name="Hallsworth K."/>
            <person name="Hawkins J."/>
            <person name="Hillier L.W."/>
            <person name="Jier M."/>
            <person name="Johnson D."/>
            <person name="Johnston L."/>
            <person name="Kirsten J."/>
            <person name="Kucaba T."/>
            <person name="Langston Y."/>
            <person name="Latreille P."/>
            <person name="Le T."/>
            <person name="Mardis E."/>
            <person name="Menezes S."/>
            <person name="Miller N."/>
            <person name="Nhan M."/>
            <person name="Pauley A."/>
            <person name="Peluso D."/>
            <person name="Rifkin L."/>
            <person name="Riles L."/>
            <person name="Taich A."/>
            <person name="Trevaskis E."/>
            <person name="Vignati D."/>
            <person name="Wilcox L."/>
            <person name="Wohldman P."/>
            <person name="Vaudin M."/>
            <person name="Wilson R."/>
            <person name="Waterston R."/>
            <person name="Albermann K."/>
            <person name="Hani J."/>
            <person name="Heumann K."/>
            <person name="Kleine K."/>
            <person name="Mewes H.-W."/>
            <person name="Zollner A."/>
            <person name="Zaccaria P."/>
        </authorList>
    </citation>
    <scope>NUCLEOTIDE SEQUENCE [LARGE SCALE GENOMIC DNA]</scope>
    <source>
        <strain>ATCC 204508 / S288c</strain>
    </source>
</reference>
<reference key="5">
    <citation type="journal article" date="2014" name="G3 (Bethesda)">
        <title>The reference genome sequence of Saccharomyces cerevisiae: Then and now.</title>
        <authorList>
            <person name="Engel S.R."/>
            <person name="Dietrich F.S."/>
            <person name="Fisk D.G."/>
            <person name="Binkley G."/>
            <person name="Balakrishnan R."/>
            <person name="Costanzo M.C."/>
            <person name="Dwight S.S."/>
            <person name="Hitz B.C."/>
            <person name="Karra K."/>
            <person name="Nash R.S."/>
            <person name="Weng S."/>
            <person name="Wong E.D."/>
            <person name="Lloyd P."/>
            <person name="Skrzypek M.S."/>
            <person name="Miyasato S.R."/>
            <person name="Simison M."/>
            <person name="Cherry J.M."/>
        </authorList>
    </citation>
    <scope>GENOME REANNOTATION</scope>
    <source>
        <strain>ATCC 204508 / S288c</strain>
    </source>
</reference>
<reference key="6">
    <citation type="journal article" date="1993" name="Mol. Gen. Genet.">
        <title>The NAM1/MTF2 nuclear gene product is selectively required for the stability and/or processing of mitochondrial transcripts of the atp6 and of the mosaic, cox1 and cytb genes in Saccharomyces cerevisiae.</title>
        <authorList>
            <person name="Groudinsky O."/>
            <person name="Bousquet I."/>
            <person name="Wallis M.G."/>
            <person name="Slonimski P.P."/>
            <person name="Dujardin G."/>
        </authorList>
    </citation>
    <scope>POSSIBLE FUNCTION</scope>
</reference>
<reference key="7">
    <citation type="journal article" date="2003" name="Nature">
        <title>Global analysis of protein expression in yeast.</title>
        <authorList>
            <person name="Ghaemmaghami S."/>
            <person name="Huh W.-K."/>
            <person name="Bower K."/>
            <person name="Howson R.W."/>
            <person name="Belle A."/>
            <person name="Dephoure N."/>
            <person name="O'Shea E.K."/>
            <person name="Weissman J.S."/>
        </authorList>
    </citation>
    <scope>LEVEL OF PROTEIN EXPRESSION [LARGE SCALE ANALYSIS]</scope>
</reference>
<comment type="function">
    <text>Required for the processing and/or for the stability of the CYTB and COX1 intron-containing pre-mRNAs and of the ATP6 transcript. Could be a stem-loop RNA-binding protein that plays a role in determining RNA stability.</text>
</comment>
<comment type="interaction">
    <interactant intactId="EBI-11823">
        <id>P10849</id>
    </interactant>
    <interactant intactId="EBI-17364">
        <id>P42900</id>
        <label>SLS1</label>
    </interactant>
    <organismsDiffer>false</organismsDiffer>
    <experiments>4</experiments>
</comment>
<comment type="subcellular location">
    <subcellularLocation>
        <location>Mitochondrion matrix</location>
    </subcellularLocation>
</comment>
<comment type="miscellaneous">
    <text evidence="1">Present with 2060 molecules/cell in log phase SD medium.</text>
</comment>
<name>MITF2_YEAST</name>
<keyword id="KW-0496">Mitochondrion</keyword>
<keyword id="KW-0507">mRNA processing</keyword>
<keyword id="KW-1185">Reference proteome</keyword>
<keyword id="KW-0694">RNA-binding</keyword>
<keyword id="KW-0809">Transit peptide</keyword>
<organism>
    <name type="scientific">Saccharomyces cerevisiae (strain ATCC 204508 / S288c)</name>
    <name type="common">Baker's yeast</name>
    <dbReference type="NCBI Taxonomy" id="559292"/>
    <lineage>
        <taxon>Eukaryota</taxon>
        <taxon>Fungi</taxon>
        <taxon>Dikarya</taxon>
        <taxon>Ascomycota</taxon>
        <taxon>Saccharomycotina</taxon>
        <taxon>Saccharomycetes</taxon>
        <taxon>Saccharomycetales</taxon>
        <taxon>Saccharomycetaceae</taxon>
        <taxon>Saccharomyces</taxon>
    </lineage>
</organism>
<proteinExistence type="evidence at protein level"/>
<dbReference type="EMBL" id="X51665">
    <property type="protein sequence ID" value="CAA35977.1"/>
    <property type="molecule type" value="Genomic_DNA"/>
</dbReference>
<dbReference type="EMBL" id="X14719">
    <property type="protein sequence ID" value="CAA32845.1"/>
    <property type="molecule type" value="Genomic_DNA"/>
</dbReference>
<dbReference type="EMBL" id="Z74092">
    <property type="protein sequence ID" value="CAA98603.1"/>
    <property type="molecule type" value="Genomic_DNA"/>
</dbReference>
<dbReference type="EMBL" id="Z71781">
    <property type="protein sequence ID" value="CAA96445.1"/>
    <property type="status" value="ALT_SEQ"/>
    <property type="molecule type" value="Genomic_DNA"/>
</dbReference>
<dbReference type="EMBL" id="BK006938">
    <property type="protein sequence ID" value="DAA11812.1"/>
    <property type="molecule type" value="Genomic_DNA"/>
</dbReference>
<dbReference type="PIR" id="JV0015">
    <property type="entry name" value="TWBYM1"/>
</dbReference>
<dbReference type="RefSeq" id="NP_010240.1">
    <property type="nucleotide sequence ID" value="NM_001180103.1"/>
</dbReference>
<dbReference type="SMR" id="P10849"/>
<dbReference type="BioGRID" id="32015">
    <property type="interactions" value="70"/>
</dbReference>
<dbReference type="DIP" id="DIP-5017N"/>
<dbReference type="FunCoup" id="P10849">
    <property type="interactions" value="82"/>
</dbReference>
<dbReference type="IntAct" id="P10849">
    <property type="interactions" value="15"/>
</dbReference>
<dbReference type="MINT" id="P10849"/>
<dbReference type="STRING" id="4932.YDL044C"/>
<dbReference type="PaxDb" id="4932-YDL044C"/>
<dbReference type="PeptideAtlas" id="P10849"/>
<dbReference type="EnsemblFungi" id="YDL044C_mRNA">
    <property type="protein sequence ID" value="YDL044C"/>
    <property type="gene ID" value="YDL044C"/>
</dbReference>
<dbReference type="GeneID" id="851517"/>
<dbReference type="KEGG" id="sce:YDL044C"/>
<dbReference type="AGR" id="SGD:S000002202"/>
<dbReference type="SGD" id="S000002202">
    <property type="gene designation" value="MTF2"/>
</dbReference>
<dbReference type="VEuPathDB" id="FungiDB:YDL044C"/>
<dbReference type="eggNOG" id="ENOG502RXV4">
    <property type="taxonomic scope" value="Eukaryota"/>
</dbReference>
<dbReference type="HOGENOM" id="CLU_056437_0_0_1"/>
<dbReference type="InParanoid" id="P10849"/>
<dbReference type="OMA" id="CNVDFYN"/>
<dbReference type="OrthoDB" id="2444174at2759"/>
<dbReference type="BioCyc" id="YEAST:G3O-29464-MONOMER"/>
<dbReference type="BioGRID-ORCS" id="851517">
    <property type="hits" value="3 hits in 10 CRISPR screens"/>
</dbReference>
<dbReference type="PRO" id="PR:P10849"/>
<dbReference type="Proteomes" id="UP000002311">
    <property type="component" value="Chromosome IV"/>
</dbReference>
<dbReference type="RNAct" id="P10849">
    <property type="molecule type" value="protein"/>
</dbReference>
<dbReference type="GO" id="GO:0005759">
    <property type="term" value="C:mitochondrial matrix"/>
    <property type="evidence" value="ECO:0007669"/>
    <property type="project" value="UniProtKB-SubCell"/>
</dbReference>
<dbReference type="GO" id="GO:0005739">
    <property type="term" value="C:mitochondrion"/>
    <property type="evidence" value="ECO:0000314"/>
    <property type="project" value="SGD"/>
</dbReference>
<dbReference type="GO" id="GO:0003723">
    <property type="term" value="F:RNA binding"/>
    <property type="evidence" value="ECO:0000315"/>
    <property type="project" value="SGD"/>
</dbReference>
<dbReference type="GO" id="GO:0032543">
    <property type="term" value="P:mitochondrial translation"/>
    <property type="evidence" value="ECO:0000315"/>
    <property type="project" value="SGD"/>
</dbReference>
<dbReference type="GO" id="GO:0070124">
    <property type="term" value="P:mitochondrial translational initiation"/>
    <property type="evidence" value="ECO:0000250"/>
    <property type="project" value="UniProtKB"/>
</dbReference>
<dbReference type="GO" id="GO:0006397">
    <property type="term" value="P:mRNA processing"/>
    <property type="evidence" value="ECO:0000315"/>
    <property type="project" value="SGD"/>
</dbReference>
<dbReference type="InterPro" id="IPR043837">
    <property type="entry name" value="Mtf2-like_C"/>
</dbReference>
<dbReference type="InterPro" id="IPR040009">
    <property type="entry name" value="Mtf2/C5D6.12-like"/>
</dbReference>
<dbReference type="PANTHER" id="PTHR39468">
    <property type="entry name" value="CHROMOSOME 7, WHOLE GENOME SHOTGUN SEQUENCE"/>
    <property type="match status" value="1"/>
</dbReference>
<dbReference type="PANTHER" id="PTHR39468:SF1">
    <property type="entry name" value="MTF2-LIKE C-TERMINAL DOMAIN-CONTAINING PROTEIN"/>
    <property type="match status" value="1"/>
</dbReference>
<dbReference type="Pfam" id="PF19189">
    <property type="entry name" value="Mtf2"/>
    <property type="match status" value="1"/>
</dbReference>
<gene>
    <name type="primary">MTF2</name>
    <name type="synonym">NAM1</name>
    <name type="ordered locus">YDL044C</name>
    <name type="ORF">D2705</name>
</gene>
<protein>
    <recommendedName>
        <fullName evidence="2">Mitochondrial translation factor 2</fullName>
    </recommendedName>
    <alternativeName>
        <fullName>Protein NAM1</fullName>
    </alternativeName>
</protein>
<evidence type="ECO:0000269" key="1">
    <source>
    </source>
</evidence>
<evidence type="ECO:0000305" key="2"/>
<accession>P10849</accession>
<accession>D6VRV2</accession>
<accession>Q05430</accession>
<sequence length="440" mass="51192">MIRTSSILKNCNYRYIHCIHRCLLNEANLKDRKTHNVERVSNEKTFEQALEEERKVFGELFEAGARVENMRHTNASKIIDKYYNGLQDNSEGTSVKKEKIVFNHSQRAQRKLPNKDHEFLKETAGNDYVYERAEPSAISTKTISEQTRTLLEKIFDEDNSINKSNRELLNLNLRKGSGMEALRQPVAHSNVKFSEEVMQEIGNKIRYQTTLDQVLEPHIDYLREAVKSDYDLLRYLKQSLDIYKKRNKDLELKMNAESSNIFEDIRSACINKPAELPKPLAMTLPYIIVKSLRLGDFDFPADRKYTLISYVYNECKNNMDASLYLTICNVDFYNLLVQLLWENFQEIRYLRRVVTEMSVNGVIGNIETVDILDKIVKEMRSLNEDVFLEAGEQLSADEEVSSSANKIVNVGVLWNKDTNNDLLIVENYLKSLKKNLTRDR</sequence>
<feature type="transit peptide" description="Mitochondrion">
    <location>
        <begin position="1"/>
        <end position="15"/>
    </location>
</feature>
<feature type="chain" id="PRO_0000021790" description="Mitochondrial translation factor 2">
    <location>
        <begin position="16"/>
        <end position="440"/>
    </location>
</feature>